<accession>O06663</accession>
<geneLocation type="plasmid">
    <name>pMYSH6000</name>
</geneLocation>
<geneLocation type="plasmid">
    <name>pCP301</name>
</geneLocation>
<evidence type="ECO:0000255" key="1">
    <source>
        <dbReference type="PROSITE-ProRule" id="PRU01076"/>
    </source>
</evidence>
<evidence type="ECO:0000269" key="2">
    <source>
    </source>
</evidence>
<evidence type="ECO:0000269" key="3">
    <source>
    </source>
</evidence>
<evidence type="ECO:0000269" key="4">
    <source>
    </source>
</evidence>
<evidence type="ECO:0000305" key="5"/>
<evidence type="ECO:0007829" key="6">
    <source>
        <dbReference type="PDB" id="3TND"/>
    </source>
</evidence>
<gene>
    <name type="primary">vapB</name>
    <name type="ordered locus">CP0246</name>
</gene>
<organism>
    <name type="scientific">Shigella flexneri</name>
    <dbReference type="NCBI Taxonomy" id="623"/>
    <lineage>
        <taxon>Bacteria</taxon>
        <taxon>Pseudomonadati</taxon>
        <taxon>Pseudomonadota</taxon>
        <taxon>Gammaproteobacteria</taxon>
        <taxon>Enterobacterales</taxon>
        <taxon>Enterobacteriaceae</taxon>
        <taxon>Shigella</taxon>
    </lineage>
</organism>
<feature type="chain" id="PRO_0000219873" description="Antitoxin VapB">
    <location>
        <begin position="1"/>
        <end position="75"/>
    </location>
</feature>
<feature type="domain" description="SpoVT-AbrB" evidence="1">
    <location>
        <begin position="3"/>
        <end position="45"/>
    </location>
</feature>
<feature type="strand" evidence="6">
    <location>
        <begin position="2"/>
        <end position="7"/>
    </location>
</feature>
<feature type="strand" evidence="6">
    <location>
        <begin position="9"/>
        <end position="16"/>
    </location>
</feature>
<feature type="helix" evidence="6">
    <location>
        <begin position="18"/>
        <end position="20"/>
    </location>
</feature>
<feature type="strand" evidence="6">
    <location>
        <begin position="28"/>
        <end position="34"/>
    </location>
</feature>
<feature type="strand" evidence="6">
    <location>
        <begin position="37"/>
        <end position="42"/>
    </location>
</feature>
<feature type="helix" evidence="6">
    <location>
        <begin position="48"/>
        <end position="52"/>
    </location>
</feature>
<feature type="turn" evidence="6">
    <location>
        <begin position="58"/>
        <end position="61"/>
    </location>
</feature>
<keyword id="KW-0002">3D-structure</keyword>
<keyword id="KW-0238">DNA-binding</keyword>
<keyword id="KW-0614">Plasmid</keyword>
<keyword id="KW-1185">Reference proteome</keyword>
<keyword id="KW-1277">Toxin-antitoxin system</keyword>
<reference key="1">
    <citation type="journal article" date="1997" name="J. Bacteriol.">
        <title>Plasmid maintenance functions of the large virulence plasmid of Shigella flexneri.</title>
        <authorList>
            <person name="Radnedge L."/>
            <person name="Davis M.A."/>
            <person name="Youngren B."/>
            <person name="Austin S.J."/>
        </authorList>
    </citation>
    <scope>NUCLEOTIDE SEQUENCE [GENOMIC DNA]</scope>
    <source>
        <strain>YSH6000 / Serotype 2a</strain>
        <plasmid>pMYSH6000</plasmid>
    </source>
</reference>
<reference key="2">
    <citation type="journal article" date="2002" name="Nucleic Acids Res.">
        <title>Genome sequence of Shigella flexneri 2a: insights into pathogenicity through comparison with genomes of Escherichia coli K12 and O157.</title>
        <authorList>
            <person name="Jin Q."/>
            <person name="Yuan Z."/>
            <person name="Xu J."/>
            <person name="Wang Y."/>
            <person name="Shen Y."/>
            <person name="Lu W."/>
            <person name="Wang J."/>
            <person name="Liu H."/>
            <person name="Yang J."/>
            <person name="Yang F."/>
            <person name="Zhang X."/>
            <person name="Zhang J."/>
            <person name="Yang G."/>
            <person name="Wu H."/>
            <person name="Qu D."/>
            <person name="Dong J."/>
            <person name="Sun L."/>
            <person name="Xue Y."/>
            <person name="Zhao A."/>
            <person name="Gao Y."/>
            <person name="Zhu J."/>
            <person name="Kan B."/>
            <person name="Ding K."/>
            <person name="Chen S."/>
            <person name="Cheng H."/>
            <person name="Yao Z."/>
            <person name="He B."/>
            <person name="Chen R."/>
            <person name="Ma D."/>
            <person name="Qiang B."/>
            <person name="Wen Y."/>
            <person name="Hou Y."/>
            <person name="Yu J."/>
        </authorList>
    </citation>
    <scope>NUCLEOTIDE SEQUENCE [LARGE SCALE GENOMIC DNA]</scope>
    <source>
        <strain>301 / Serotype 2a</strain>
        <plasmid>pCP301</plasmid>
    </source>
</reference>
<reference key="3">
    <citation type="journal article" date="2009" name="Mol. Microbiol.">
        <title>Ectopic production of VapCs from Enterobacteria inhibits translation and trans-activates YoeB mRNA interferase.</title>
        <authorList>
            <person name="Winther K.S."/>
            <person name="Gerdes K."/>
        </authorList>
    </citation>
    <scope>FUNCTION AS AN ANTITOXIN</scope>
    <source>
        <strain>YSH6000 / Serotype 2a</strain>
        <plasmid>pMYSH6000</plasmid>
    </source>
</reference>
<reference key="4">
    <citation type="journal article" date="2011" name="Proc. Natl. Acad. Sci. U.S.A.">
        <title>Enteric virulence associated protein VapC inhibits translation by cleavage of initiator tRNA.</title>
        <authorList>
            <person name="Winther K.S."/>
            <person name="Gerdes K."/>
        </authorList>
    </citation>
    <scope>FUNCTION AS AN ANTITOXIN</scope>
    <scope>SUBUNIT</scope>
    <scope>INDUCTION</scope>
    <source>
        <strain>YSH6000 / Serotype 2a</strain>
        <plasmid>pMYSH6000</plasmid>
    </source>
</reference>
<reference key="5">
    <citation type="journal article" date="2011" name="J. Mol. Biol.">
        <title>Crystal structure of the VapBC toxin-antitoxin complex from Shigella flexneri reveals a hetero-octameric DNA-binding assembly.</title>
        <authorList>
            <person name="Dienemann C."/>
            <person name="Boggild A."/>
            <person name="Winther K.S."/>
            <person name="Gerdes K."/>
            <person name="Brodersen D.E."/>
        </authorList>
    </citation>
    <scope>X-RAY CRYSTALLOGRAPHY (2.7 ANGSTROMS) OF 2-75</scope>
    <scope>INTERACTION WITH VAPC</scope>
    <scope>SUBUNIT</scope>
    <scope>DNA-BINDING</scope>
    <source>
        <strain>YSH6000 / Serotype 2a</strain>
        <plasmid>pMYSH6000</plasmid>
    </source>
</reference>
<proteinExistence type="evidence at protein level"/>
<sequence length="75" mass="8566">METTVFLSNRSQAVRLPKAVALPENVKRVEVIAVGRTRIITPAGETWDEWFDGHSVSTDFMDNREQPGMQERESF</sequence>
<protein>
    <recommendedName>
        <fullName>Antitoxin VapB</fullName>
    </recommendedName>
</protein>
<name>VAPB_SHIFL</name>
<dbReference type="EMBL" id="U82621">
    <property type="protein sequence ID" value="AAB58158.1"/>
    <property type="molecule type" value="Genomic_DNA"/>
</dbReference>
<dbReference type="EMBL" id="AF386526">
    <property type="protein sequence ID" value="AAL72334.1"/>
    <property type="molecule type" value="Genomic_DNA"/>
</dbReference>
<dbReference type="RefSeq" id="WP_000450531.1">
    <property type="nucleotide sequence ID" value="NZ_WPGW01000138.1"/>
</dbReference>
<dbReference type="PDB" id="3TND">
    <property type="method" value="X-ray"/>
    <property type="resolution" value="2.70 A"/>
    <property type="chains" value="B/D/F/H=2-75"/>
</dbReference>
<dbReference type="PDBsum" id="3TND"/>
<dbReference type="SMR" id="O06663"/>
<dbReference type="PaxDb" id="198214-CP0246"/>
<dbReference type="KEGG" id="sfl:CP0246"/>
<dbReference type="PATRIC" id="fig|198214.7.peg.5507"/>
<dbReference type="HOGENOM" id="CLU_162018_3_2_6"/>
<dbReference type="EvolutionaryTrace" id="O06663"/>
<dbReference type="Proteomes" id="UP000001006">
    <property type="component" value="Plasmid pCP301"/>
</dbReference>
<dbReference type="GO" id="GO:0003677">
    <property type="term" value="F:DNA binding"/>
    <property type="evidence" value="ECO:0007669"/>
    <property type="project" value="UniProtKB-KW"/>
</dbReference>
<dbReference type="Gene3D" id="2.10.260.10">
    <property type="match status" value="1"/>
</dbReference>
<dbReference type="InterPro" id="IPR047976">
    <property type="entry name" value="Anti_VapB2-like"/>
</dbReference>
<dbReference type="InterPro" id="IPR007159">
    <property type="entry name" value="SpoVT-AbrB_dom"/>
</dbReference>
<dbReference type="InterPro" id="IPR037914">
    <property type="entry name" value="SpoVT-AbrB_sf"/>
</dbReference>
<dbReference type="InterPro" id="IPR051734">
    <property type="entry name" value="VapB_TA_antitoxins"/>
</dbReference>
<dbReference type="NCBIfam" id="NF040493">
    <property type="entry name" value="TA_anti_VapB"/>
    <property type="match status" value="1"/>
</dbReference>
<dbReference type="PANTHER" id="PTHR37550">
    <property type="entry name" value="ANTITOXIN VAPB1"/>
    <property type="match status" value="1"/>
</dbReference>
<dbReference type="PANTHER" id="PTHR37550:SF3">
    <property type="entry name" value="ANTITOXIN VAPB1"/>
    <property type="match status" value="1"/>
</dbReference>
<dbReference type="SUPFAM" id="SSF89447">
    <property type="entry name" value="AbrB/MazE/MraZ-like"/>
    <property type="match status" value="1"/>
</dbReference>
<dbReference type="PROSITE" id="PS51740">
    <property type="entry name" value="SPOVT_ABRB"/>
    <property type="match status" value="1"/>
</dbReference>
<comment type="function">
    <text evidence="2 3">Antitoxin component of a type II toxin-antitoxin (TA) system. Upon expression in E.coli neutralizes the effect of cognate toxin VapC. The VapB/VapC complex probably regulates transcription of its own promoter.</text>
</comment>
<comment type="subunit">
    <text evidence="3 4 5">Homodimer (Probable). Forms a hetero-octamer (4 VapB and 4 VapC) complex with toxin VapC. The complex binds 2 different sites in the vapBC promoter, probably via VapB dimerization.</text>
</comment>
<comment type="induction">
    <text evidence="3">Degradation of tRNA(fMet) is induced by chloramphenicol treatment, suggesting the antitoxin is unstable when the growth rate decreases.</text>
</comment>
<comment type="similarity">
    <text evidence="5">Belongs to the VapB family.</text>
</comment>